<sequence length="11" mass="1147">GSSGMIPFPRV</sequence>
<proteinExistence type="evidence at protein level"/>
<evidence type="ECO:0000255" key="1"/>
<evidence type="ECO:0000269" key="2">
    <source>
    </source>
</evidence>
<evidence type="ECO:0000303" key="3">
    <source>
    </source>
</evidence>
<evidence type="ECO:0000305" key="4"/>
<name>PVK3_LUCVE</name>
<reference evidence="4" key="1">
    <citation type="journal article" date="2009" name="BMC Evol. Biol.">
        <title>A proteomic approach for studying insect phylogeny: CAPA peptides of ancient insect taxa (Dictyoptera, Blattoptera) as a test case.</title>
        <authorList>
            <person name="Roth S."/>
            <person name="Fromm B."/>
            <person name="Gaede G."/>
            <person name="Predel R."/>
        </authorList>
    </citation>
    <scope>PROTEIN SEQUENCE</scope>
    <scope>AMIDATION AT VAL-11</scope>
    <source>
        <tissue evidence="2">Abdominal perisympathetic organs</tissue>
    </source>
</reference>
<organism>
    <name type="scientific">Lucihormetica verrucosa</name>
    <name type="common">Cockroach</name>
    <dbReference type="NCBI Taxonomy" id="521514"/>
    <lineage>
        <taxon>Eukaryota</taxon>
        <taxon>Metazoa</taxon>
        <taxon>Ecdysozoa</taxon>
        <taxon>Arthropoda</taxon>
        <taxon>Hexapoda</taxon>
        <taxon>Insecta</taxon>
        <taxon>Pterygota</taxon>
        <taxon>Neoptera</taxon>
        <taxon>Polyneoptera</taxon>
        <taxon>Dictyoptera</taxon>
        <taxon>Blattodea</taxon>
        <taxon>Blaberoidea</taxon>
        <taxon>Blaberidae</taxon>
        <taxon>Blaberinae</taxon>
        <taxon>Lucihormetica</taxon>
    </lineage>
</organism>
<keyword id="KW-0027">Amidation</keyword>
<keyword id="KW-0903">Direct protein sequencing</keyword>
<keyword id="KW-0527">Neuropeptide</keyword>
<keyword id="KW-0964">Secreted</keyword>
<dbReference type="GO" id="GO:0005576">
    <property type="term" value="C:extracellular region"/>
    <property type="evidence" value="ECO:0007669"/>
    <property type="project" value="UniProtKB-SubCell"/>
</dbReference>
<dbReference type="GO" id="GO:0007218">
    <property type="term" value="P:neuropeptide signaling pathway"/>
    <property type="evidence" value="ECO:0007669"/>
    <property type="project" value="UniProtKB-KW"/>
</dbReference>
<dbReference type="InterPro" id="IPR013231">
    <property type="entry name" value="Periviscerokinin"/>
</dbReference>
<dbReference type="Pfam" id="PF08259">
    <property type="entry name" value="Periviscerokin"/>
    <property type="match status" value="1"/>
</dbReference>
<accession>P85674</accession>
<protein>
    <recommendedName>
        <fullName evidence="3">Periviscerokinin-3</fullName>
        <shortName evidence="3">LucVe-PVK-3</shortName>
    </recommendedName>
</protein>
<comment type="function">
    <text evidence="4">Mediates visceral muscle contractile activity (myotropic activity).</text>
</comment>
<comment type="subcellular location">
    <subcellularLocation>
        <location evidence="4">Secreted</location>
    </subcellularLocation>
</comment>
<comment type="similarity">
    <text evidence="1">Belongs to the periviscerokinin family.</text>
</comment>
<feature type="peptide" id="PRO_0000378841" description="Periviscerokinin-3" evidence="2">
    <location>
        <begin position="1"/>
        <end position="11"/>
    </location>
</feature>
<feature type="modified residue" description="Valine amide" evidence="2">
    <location>
        <position position="11"/>
    </location>
</feature>